<keyword id="KW-0067">ATP-binding</keyword>
<keyword id="KW-0436">Ligase</keyword>
<keyword id="KW-0460">Magnesium</keyword>
<keyword id="KW-0464">Manganese</keyword>
<keyword id="KW-0479">Metal-binding</keyword>
<keyword id="KW-0547">Nucleotide-binding</keyword>
<keyword id="KW-0658">Purine biosynthesis</keyword>
<proteinExistence type="inferred from homology"/>
<sequence length="333" mass="37993">MSVLKRYDLEKLAVATVASHTALQILRGAKKYGFRTIAIAGRADVAEFYQQFNFIDEVWTVDFRNFVKAAEKLVEANAVFIPHGSYVEYVGWRQALEAPVPTLGCRELIKWEADQYKKMELLQRGGIPTSRVYKTPEEVDRPVIVKLFGAKGGRGYFLARDREELRRRLAGLSDYIIQEYVFGVPAYYHYFSSPVYGRVEVFGADIRYESNVDGRTFGWVEPTFVVVGNLPLVLRESLLPTIWKYGVQFAKAVEEVVGCRLAGPYCLESIIRDDMSISVFEFSGRIVAGTNIYMGYGSPYSVLYFDRPMDMGERIAHEIREAARRGRLEDLFT</sequence>
<protein>
    <recommendedName>
        <fullName evidence="2">5-formaminoimidazole-4-carboxamide-1-(beta)-D-ribofuranosyl 5'-monophosphate synthetase</fullName>
        <ecNumber evidence="2">6.3.4.23</ecNumber>
    </recommendedName>
    <alternativeName>
        <fullName evidence="2">5-aminoimidazole-4-carboxamide-1-beta-D-ribofuranosyl 5'-monophosphate--formate ligase</fullName>
    </alternativeName>
</protein>
<reference key="1">
    <citation type="submission" date="2006-12" db="EMBL/GenBank/DDBJ databases">
        <title>Complete sequence of Pyrobaculum islandicum DSM 4184.</title>
        <authorList>
            <person name="Copeland A."/>
            <person name="Lucas S."/>
            <person name="Lapidus A."/>
            <person name="Barry K."/>
            <person name="Detter J.C."/>
            <person name="Glavina del Rio T."/>
            <person name="Dalin E."/>
            <person name="Tice H."/>
            <person name="Pitluck S."/>
            <person name="Meincke L."/>
            <person name="Brettin T."/>
            <person name="Bruce D."/>
            <person name="Han C."/>
            <person name="Tapia R."/>
            <person name="Gilna P."/>
            <person name="Schmutz J."/>
            <person name="Larimer F."/>
            <person name="Land M."/>
            <person name="Hauser L."/>
            <person name="Kyrpides N."/>
            <person name="Mikhailova N."/>
            <person name="Cozen A.E."/>
            <person name="Fitz-Gibbon S.T."/>
            <person name="House C.H."/>
            <person name="Saltikov C."/>
            <person name="Lowe T."/>
            <person name="Richardson P."/>
        </authorList>
    </citation>
    <scope>NUCLEOTIDE SEQUENCE [LARGE SCALE GENOMIC DNA]</scope>
    <source>
        <strain>DSM 4184 / JCM 9189 / GEO3</strain>
    </source>
</reference>
<dbReference type="EC" id="6.3.4.23" evidence="2"/>
<dbReference type="EMBL" id="CP000504">
    <property type="protein sequence ID" value="ABL87277.1"/>
    <property type="status" value="ALT_INIT"/>
    <property type="molecule type" value="Genomic_DNA"/>
</dbReference>
<dbReference type="RefSeq" id="WP_053240228.1">
    <property type="nucleotide sequence ID" value="NC_008701.1"/>
</dbReference>
<dbReference type="SMR" id="A1RQP5"/>
<dbReference type="STRING" id="384616.Pisl_0094"/>
<dbReference type="GeneID" id="4616976"/>
<dbReference type="KEGG" id="pis:Pisl_0094"/>
<dbReference type="eggNOG" id="arCOG04346">
    <property type="taxonomic scope" value="Archaea"/>
</dbReference>
<dbReference type="HOGENOM" id="CLU_065084_0_0_2"/>
<dbReference type="OrthoDB" id="98133at2157"/>
<dbReference type="UniPathway" id="UPA00074">
    <property type="reaction ID" value="UER00134"/>
</dbReference>
<dbReference type="Proteomes" id="UP000002595">
    <property type="component" value="Chromosome"/>
</dbReference>
<dbReference type="GO" id="GO:0005524">
    <property type="term" value="F:ATP binding"/>
    <property type="evidence" value="ECO:0007669"/>
    <property type="project" value="UniProtKB-KW"/>
</dbReference>
<dbReference type="GO" id="GO:0016879">
    <property type="term" value="F:ligase activity, forming carbon-nitrogen bonds"/>
    <property type="evidence" value="ECO:0007669"/>
    <property type="project" value="UniProtKB-UniRule"/>
</dbReference>
<dbReference type="GO" id="GO:0000287">
    <property type="term" value="F:magnesium ion binding"/>
    <property type="evidence" value="ECO:0007669"/>
    <property type="project" value="InterPro"/>
</dbReference>
<dbReference type="GO" id="GO:0006189">
    <property type="term" value="P:'de novo' IMP biosynthetic process"/>
    <property type="evidence" value="ECO:0007669"/>
    <property type="project" value="UniProtKB-UniRule"/>
</dbReference>
<dbReference type="Gene3D" id="3.40.50.20">
    <property type="match status" value="1"/>
</dbReference>
<dbReference type="Gene3D" id="3.30.1490.20">
    <property type="entry name" value="ATP-grasp fold, A domain"/>
    <property type="match status" value="1"/>
</dbReference>
<dbReference type="Gene3D" id="3.30.470.20">
    <property type="entry name" value="ATP-grasp fold, B domain"/>
    <property type="match status" value="1"/>
</dbReference>
<dbReference type="HAMAP" id="MF_01163">
    <property type="entry name" value="IMP_biosynth_PurP"/>
    <property type="match status" value="1"/>
</dbReference>
<dbReference type="InterPro" id="IPR011761">
    <property type="entry name" value="ATP-grasp"/>
</dbReference>
<dbReference type="InterPro" id="IPR013815">
    <property type="entry name" value="ATP_grasp_subdomain_1"/>
</dbReference>
<dbReference type="InterPro" id="IPR023656">
    <property type="entry name" value="IMP_biosynth_PurP"/>
</dbReference>
<dbReference type="InterPro" id="IPR009720">
    <property type="entry name" value="IMP_biosynth_PurP_C"/>
</dbReference>
<dbReference type="InterPro" id="IPR010672">
    <property type="entry name" value="IMP_biosynth_PurP_N"/>
</dbReference>
<dbReference type="InterPro" id="IPR016185">
    <property type="entry name" value="PreATP-grasp_dom_sf"/>
</dbReference>
<dbReference type="PANTHER" id="PTHR38147:SF2">
    <property type="entry name" value="5-FORMAMINOIMIDAZOLE-4-CARBOXAMIDE-1-(BETA)-D-RIBOFURANOSYL 5'-MONOPHOSPHATE SYNTHETASE"/>
    <property type="match status" value="1"/>
</dbReference>
<dbReference type="PANTHER" id="PTHR38147">
    <property type="entry name" value="5-FORMAMINOIMIDAZOLE-4-CARBOXAMIDE-1-(BETA)-D-RIBOFURANOSYL 5'-MONOPHOSPHATE SYNTHETASE-RELATED"/>
    <property type="match status" value="1"/>
</dbReference>
<dbReference type="Pfam" id="PF06849">
    <property type="entry name" value="DUF1246"/>
    <property type="match status" value="1"/>
</dbReference>
<dbReference type="Pfam" id="PF06973">
    <property type="entry name" value="DUF1297"/>
    <property type="match status" value="1"/>
</dbReference>
<dbReference type="PIRSF" id="PIRSF004602">
    <property type="entry name" value="ATPgrasp_PurP"/>
    <property type="match status" value="1"/>
</dbReference>
<dbReference type="SUPFAM" id="SSF56059">
    <property type="entry name" value="Glutathione synthetase ATP-binding domain-like"/>
    <property type="match status" value="1"/>
</dbReference>
<dbReference type="SUPFAM" id="SSF52440">
    <property type="entry name" value="PreATP-grasp domain"/>
    <property type="match status" value="1"/>
</dbReference>
<dbReference type="PROSITE" id="PS50975">
    <property type="entry name" value="ATP_GRASP"/>
    <property type="match status" value="1"/>
</dbReference>
<gene>
    <name evidence="2" type="primary">purP</name>
    <name type="ordered locus">Pisl_0094</name>
</gene>
<feature type="chain" id="PRO_0000348634" description="5-formaminoimidazole-4-carboxamide-1-(beta)-D-ribofuranosyl 5'-monophosphate synthetase">
    <location>
        <begin position="1"/>
        <end position="333"/>
    </location>
</feature>
<feature type="domain" description="ATP-grasp" evidence="2">
    <location>
        <begin position="106"/>
        <end position="313"/>
    </location>
</feature>
<feature type="binding site" evidence="2">
    <location>
        <position position="20"/>
    </location>
    <ligand>
        <name>5-amino-1-(5-phospho-beta-D-ribosyl)imidazole-4-carboxamide</name>
        <dbReference type="ChEBI" id="CHEBI:58475"/>
    </ligand>
</feature>
<feature type="binding site" evidence="2">
    <location>
        <position position="85"/>
    </location>
    <ligand>
        <name>5-amino-1-(5-phospho-beta-D-ribosyl)imidazole-4-carboxamide</name>
        <dbReference type="ChEBI" id="CHEBI:58475"/>
    </ligand>
</feature>
<feature type="binding site" evidence="2">
    <location>
        <begin position="136"/>
        <end position="187"/>
    </location>
    <ligand>
        <name>ATP</name>
        <dbReference type="ChEBI" id="CHEBI:30616"/>
    </ligand>
</feature>
<feature type="binding site" evidence="2">
    <location>
        <position position="209"/>
    </location>
    <ligand>
        <name>ATP</name>
        <dbReference type="ChEBI" id="CHEBI:30616"/>
    </ligand>
</feature>
<feature type="binding site" evidence="2">
    <location>
        <position position="229"/>
    </location>
    <ligand>
        <name>5-amino-1-(5-phospho-beta-D-ribosyl)imidazole-4-carboxamide</name>
        <dbReference type="ChEBI" id="CHEBI:58475"/>
    </ligand>
</feature>
<feature type="binding site" evidence="2">
    <location>
        <position position="268"/>
    </location>
    <ligand>
        <name>Mg(2+)</name>
        <dbReference type="ChEBI" id="CHEBI:18420"/>
    </ligand>
</feature>
<feature type="binding site" evidence="2">
    <location>
        <position position="281"/>
    </location>
    <ligand>
        <name>Mg(2+)</name>
        <dbReference type="ChEBI" id="CHEBI:18420"/>
    </ligand>
</feature>
<evidence type="ECO:0000250" key="1"/>
<evidence type="ECO:0000255" key="2">
    <source>
        <dbReference type="HAMAP-Rule" id="MF_01163"/>
    </source>
</evidence>
<evidence type="ECO:0000305" key="3"/>
<comment type="function">
    <text evidence="2">Catalyzes the ATP- and formate-dependent formylation of 5-aminoimidazole-4-carboxamide-1-beta-d-ribofuranosyl 5'-monophosphate (AICAR) to 5-formaminoimidazole-4-carboxamide-1-beta-d-ribofuranosyl 5'-monophosphate (FAICAR) in the absence of folates.</text>
</comment>
<comment type="catalytic activity">
    <reaction evidence="2">
        <text>5-amino-1-(5-phospho-beta-D-ribosyl)imidazole-4-carboxamide + formate + ATP = 5-formamido-1-(5-phospho-D-ribosyl)imidazole-4-carboxamide + ADP + phosphate</text>
        <dbReference type="Rhea" id="RHEA:24836"/>
        <dbReference type="ChEBI" id="CHEBI:15740"/>
        <dbReference type="ChEBI" id="CHEBI:30616"/>
        <dbReference type="ChEBI" id="CHEBI:43474"/>
        <dbReference type="ChEBI" id="CHEBI:58467"/>
        <dbReference type="ChEBI" id="CHEBI:58475"/>
        <dbReference type="ChEBI" id="CHEBI:456216"/>
        <dbReference type="EC" id="6.3.4.23"/>
    </reaction>
</comment>
<comment type="cofactor">
    <cofactor evidence="1">
        <name>Mg(2+)</name>
        <dbReference type="ChEBI" id="CHEBI:18420"/>
    </cofactor>
    <cofactor evidence="1">
        <name>Mn(2+)</name>
        <dbReference type="ChEBI" id="CHEBI:29035"/>
    </cofactor>
    <text evidence="1">Binds 1 Mg(2+) or Mn(2+) ion per subunit.</text>
</comment>
<comment type="pathway">
    <text evidence="2">Purine metabolism; IMP biosynthesis via de novo pathway; 5-formamido-1-(5-phospho-D-ribosyl)imidazole-4-carboxamide from 5-amino-1-(5-phospho-D-ribosyl)imidazole-4-carboxamide (formate route): step 1/1.</text>
</comment>
<comment type="similarity">
    <text evidence="2">Belongs to the phosphohexose mutase family.</text>
</comment>
<comment type="sequence caution" evidence="3">
    <conflict type="erroneous initiation">
        <sequence resource="EMBL-CDS" id="ABL87277"/>
    </conflict>
</comment>
<organism>
    <name type="scientific">Pyrobaculum islandicum (strain DSM 4184 / JCM 9189 / GEO3)</name>
    <dbReference type="NCBI Taxonomy" id="384616"/>
    <lineage>
        <taxon>Archaea</taxon>
        <taxon>Thermoproteota</taxon>
        <taxon>Thermoprotei</taxon>
        <taxon>Thermoproteales</taxon>
        <taxon>Thermoproteaceae</taxon>
        <taxon>Pyrobaculum</taxon>
    </lineage>
</organism>
<accession>A1RQP5</accession>
<name>PURP_PYRIL</name>